<proteinExistence type="inferred from homology"/>
<accession>Q4UQT6</accession>
<name>GLYA_XANC8</name>
<keyword id="KW-0028">Amino-acid biosynthesis</keyword>
<keyword id="KW-0963">Cytoplasm</keyword>
<keyword id="KW-0554">One-carbon metabolism</keyword>
<keyword id="KW-0663">Pyridoxal phosphate</keyword>
<keyword id="KW-0808">Transferase</keyword>
<reference key="1">
    <citation type="journal article" date="2005" name="Genome Res.">
        <title>Comparative and functional genomic analyses of the pathogenicity of phytopathogen Xanthomonas campestris pv. campestris.</title>
        <authorList>
            <person name="Qian W."/>
            <person name="Jia Y."/>
            <person name="Ren S.-X."/>
            <person name="He Y.-Q."/>
            <person name="Feng J.-X."/>
            <person name="Lu L.-F."/>
            <person name="Sun Q."/>
            <person name="Ying G."/>
            <person name="Tang D.-J."/>
            <person name="Tang H."/>
            <person name="Wu W."/>
            <person name="Hao P."/>
            <person name="Wang L."/>
            <person name="Jiang B.-L."/>
            <person name="Zeng S."/>
            <person name="Gu W.-Y."/>
            <person name="Lu G."/>
            <person name="Rong L."/>
            <person name="Tian Y."/>
            <person name="Yao Z."/>
            <person name="Fu G."/>
            <person name="Chen B."/>
            <person name="Fang R."/>
            <person name="Qiang B."/>
            <person name="Chen Z."/>
            <person name="Zhao G.-P."/>
            <person name="Tang J.-L."/>
            <person name="He C."/>
        </authorList>
    </citation>
    <scope>NUCLEOTIDE SEQUENCE [LARGE SCALE GENOMIC DNA]</scope>
    <source>
        <strain>8004</strain>
    </source>
</reference>
<feature type="chain" id="PRO_0000235049" description="Serine hydroxymethyltransferase">
    <location>
        <begin position="1"/>
        <end position="417"/>
    </location>
</feature>
<feature type="binding site" evidence="1">
    <location>
        <position position="121"/>
    </location>
    <ligand>
        <name>(6S)-5,6,7,8-tetrahydrofolate</name>
        <dbReference type="ChEBI" id="CHEBI:57453"/>
    </ligand>
</feature>
<feature type="binding site" evidence="1">
    <location>
        <begin position="125"/>
        <end position="127"/>
    </location>
    <ligand>
        <name>(6S)-5,6,7,8-tetrahydrofolate</name>
        <dbReference type="ChEBI" id="CHEBI:57453"/>
    </ligand>
</feature>
<feature type="binding site" evidence="1">
    <location>
        <begin position="355"/>
        <end position="357"/>
    </location>
    <ligand>
        <name>(6S)-5,6,7,8-tetrahydrofolate</name>
        <dbReference type="ChEBI" id="CHEBI:57453"/>
    </ligand>
</feature>
<feature type="site" description="Plays an important role in substrate specificity" evidence="1">
    <location>
        <position position="228"/>
    </location>
</feature>
<feature type="modified residue" description="N6-(pyridoxal phosphate)lysine" evidence="1">
    <location>
        <position position="229"/>
    </location>
</feature>
<protein>
    <recommendedName>
        <fullName evidence="1">Serine hydroxymethyltransferase</fullName>
        <shortName evidence="1">SHMT</shortName>
        <shortName evidence="1">Serine methylase</shortName>
        <ecNumber evidence="1">2.1.2.1</ecNumber>
    </recommendedName>
</protein>
<evidence type="ECO:0000255" key="1">
    <source>
        <dbReference type="HAMAP-Rule" id="MF_00051"/>
    </source>
</evidence>
<dbReference type="EC" id="2.1.2.1" evidence="1"/>
<dbReference type="EMBL" id="CP000050">
    <property type="protein sequence ID" value="AAY50587.1"/>
    <property type="molecule type" value="Genomic_DNA"/>
</dbReference>
<dbReference type="RefSeq" id="WP_011035930.1">
    <property type="nucleotide sequence ID" value="NZ_CP155948.1"/>
</dbReference>
<dbReference type="SMR" id="Q4UQT6"/>
<dbReference type="KEGG" id="xcb:XC_3544"/>
<dbReference type="HOGENOM" id="CLU_022477_2_1_6"/>
<dbReference type="UniPathway" id="UPA00193"/>
<dbReference type="UniPathway" id="UPA00288">
    <property type="reaction ID" value="UER01023"/>
</dbReference>
<dbReference type="Proteomes" id="UP000000420">
    <property type="component" value="Chromosome"/>
</dbReference>
<dbReference type="GO" id="GO:0005829">
    <property type="term" value="C:cytosol"/>
    <property type="evidence" value="ECO:0007669"/>
    <property type="project" value="TreeGrafter"/>
</dbReference>
<dbReference type="GO" id="GO:0004372">
    <property type="term" value="F:glycine hydroxymethyltransferase activity"/>
    <property type="evidence" value="ECO:0007669"/>
    <property type="project" value="UniProtKB-UniRule"/>
</dbReference>
<dbReference type="GO" id="GO:0030170">
    <property type="term" value="F:pyridoxal phosphate binding"/>
    <property type="evidence" value="ECO:0007669"/>
    <property type="project" value="UniProtKB-UniRule"/>
</dbReference>
<dbReference type="GO" id="GO:0019264">
    <property type="term" value="P:glycine biosynthetic process from serine"/>
    <property type="evidence" value="ECO:0007669"/>
    <property type="project" value="UniProtKB-UniRule"/>
</dbReference>
<dbReference type="GO" id="GO:0035999">
    <property type="term" value="P:tetrahydrofolate interconversion"/>
    <property type="evidence" value="ECO:0007669"/>
    <property type="project" value="UniProtKB-UniRule"/>
</dbReference>
<dbReference type="CDD" id="cd00378">
    <property type="entry name" value="SHMT"/>
    <property type="match status" value="1"/>
</dbReference>
<dbReference type="FunFam" id="3.40.640.10:FF:000001">
    <property type="entry name" value="Serine hydroxymethyltransferase"/>
    <property type="match status" value="1"/>
</dbReference>
<dbReference type="FunFam" id="3.90.1150.10:FF:000003">
    <property type="entry name" value="Serine hydroxymethyltransferase"/>
    <property type="match status" value="1"/>
</dbReference>
<dbReference type="Gene3D" id="3.90.1150.10">
    <property type="entry name" value="Aspartate Aminotransferase, domain 1"/>
    <property type="match status" value="1"/>
</dbReference>
<dbReference type="Gene3D" id="3.40.640.10">
    <property type="entry name" value="Type I PLP-dependent aspartate aminotransferase-like (Major domain)"/>
    <property type="match status" value="1"/>
</dbReference>
<dbReference type="HAMAP" id="MF_00051">
    <property type="entry name" value="SHMT"/>
    <property type="match status" value="1"/>
</dbReference>
<dbReference type="InterPro" id="IPR015424">
    <property type="entry name" value="PyrdxlP-dep_Trfase"/>
</dbReference>
<dbReference type="InterPro" id="IPR015421">
    <property type="entry name" value="PyrdxlP-dep_Trfase_major"/>
</dbReference>
<dbReference type="InterPro" id="IPR015422">
    <property type="entry name" value="PyrdxlP-dep_Trfase_small"/>
</dbReference>
<dbReference type="InterPro" id="IPR001085">
    <property type="entry name" value="Ser_HO-MeTrfase"/>
</dbReference>
<dbReference type="InterPro" id="IPR049943">
    <property type="entry name" value="Ser_HO-MeTrfase-like"/>
</dbReference>
<dbReference type="InterPro" id="IPR019798">
    <property type="entry name" value="Ser_HO-MeTrfase_PLP_BS"/>
</dbReference>
<dbReference type="InterPro" id="IPR039429">
    <property type="entry name" value="SHMT-like_dom"/>
</dbReference>
<dbReference type="NCBIfam" id="NF000586">
    <property type="entry name" value="PRK00011.1"/>
    <property type="match status" value="1"/>
</dbReference>
<dbReference type="PANTHER" id="PTHR11680">
    <property type="entry name" value="SERINE HYDROXYMETHYLTRANSFERASE"/>
    <property type="match status" value="1"/>
</dbReference>
<dbReference type="PANTHER" id="PTHR11680:SF50">
    <property type="entry name" value="SERINE HYDROXYMETHYLTRANSFERASE"/>
    <property type="match status" value="1"/>
</dbReference>
<dbReference type="Pfam" id="PF00464">
    <property type="entry name" value="SHMT"/>
    <property type="match status" value="1"/>
</dbReference>
<dbReference type="PIRSF" id="PIRSF000412">
    <property type="entry name" value="SHMT"/>
    <property type="match status" value="1"/>
</dbReference>
<dbReference type="SUPFAM" id="SSF53383">
    <property type="entry name" value="PLP-dependent transferases"/>
    <property type="match status" value="1"/>
</dbReference>
<dbReference type="PROSITE" id="PS00096">
    <property type="entry name" value="SHMT"/>
    <property type="match status" value="1"/>
</dbReference>
<organism>
    <name type="scientific">Xanthomonas campestris pv. campestris (strain 8004)</name>
    <dbReference type="NCBI Taxonomy" id="314565"/>
    <lineage>
        <taxon>Bacteria</taxon>
        <taxon>Pseudomonadati</taxon>
        <taxon>Pseudomonadota</taxon>
        <taxon>Gammaproteobacteria</taxon>
        <taxon>Lysobacterales</taxon>
        <taxon>Lysobacteraceae</taxon>
        <taxon>Xanthomonas</taxon>
    </lineage>
</organism>
<gene>
    <name evidence="1" type="primary">glyA</name>
    <name type="ordered locus">XC_3544</name>
</gene>
<comment type="function">
    <text evidence="1">Catalyzes the reversible interconversion of serine and glycine with tetrahydrofolate (THF) serving as the one-carbon carrier. This reaction serves as the major source of one-carbon groups required for the biosynthesis of purines, thymidylate, methionine, and other important biomolecules. Also exhibits THF-independent aldolase activity toward beta-hydroxyamino acids, producing glycine and aldehydes, via a retro-aldol mechanism.</text>
</comment>
<comment type="catalytic activity">
    <reaction evidence="1">
        <text>(6R)-5,10-methylene-5,6,7,8-tetrahydrofolate + glycine + H2O = (6S)-5,6,7,8-tetrahydrofolate + L-serine</text>
        <dbReference type="Rhea" id="RHEA:15481"/>
        <dbReference type="ChEBI" id="CHEBI:15377"/>
        <dbReference type="ChEBI" id="CHEBI:15636"/>
        <dbReference type="ChEBI" id="CHEBI:33384"/>
        <dbReference type="ChEBI" id="CHEBI:57305"/>
        <dbReference type="ChEBI" id="CHEBI:57453"/>
        <dbReference type="EC" id="2.1.2.1"/>
    </reaction>
</comment>
<comment type="cofactor">
    <cofactor evidence="1">
        <name>pyridoxal 5'-phosphate</name>
        <dbReference type="ChEBI" id="CHEBI:597326"/>
    </cofactor>
</comment>
<comment type="pathway">
    <text evidence="1">One-carbon metabolism; tetrahydrofolate interconversion.</text>
</comment>
<comment type="pathway">
    <text evidence="1">Amino-acid biosynthesis; glycine biosynthesis; glycine from L-serine: step 1/1.</text>
</comment>
<comment type="subunit">
    <text evidence="1">Homodimer.</text>
</comment>
<comment type="subcellular location">
    <subcellularLocation>
        <location evidence="1">Cytoplasm</location>
    </subcellularLocation>
</comment>
<comment type="similarity">
    <text evidence="1">Belongs to the SHMT family.</text>
</comment>
<sequence length="417" mass="44870">MFSRDVRLETYDPELAKAIAAEAGRQEDHVELIASENYCSPLVMEAQGSQLTNKYAEGYPGKRYYGGCEFVDIAEQLAIDRIKQVFGADYANVQPHSGSQANQAVYLALLQPGDTILGMSLAHGGHLTHGAKVNASGKLFNAVQYGVNEQGLIDYDEVQRLATEHKPKMVIAGFSAYSQKIDWARFRAIADSVGAYLFVDMAHVAGLVAAGVYPSPMDHAHVVTSTTHKTLRGPRGGIILAKGAGEDLVKKLQSIVFPGIQGGPLMHVIAAKAVAFKEALEPEFKTYQQQVVKNAQAMANTLIARGYKIVSGGTENHLMLVDMIGRDVSGKDAEAALGKAHITVNKNSVPNDPRSPFVTSGLRLGTPAITTRGYQEQDCVDLANWIADVLDAPADDAVLAKVRDAVTAQCKKYPVYG</sequence>